<gene>
    <name type="primary">atpC1</name>
    <name type="ordered locus">RSc3316</name>
    <name type="ORF">RS02546</name>
</gene>
<protein>
    <recommendedName>
        <fullName>ATP synthase epsilon chain 1</fullName>
    </recommendedName>
    <alternativeName>
        <fullName>ATP synthase F1 sector epsilon subunit 1</fullName>
    </alternativeName>
    <alternativeName>
        <fullName>F-ATPase epsilon subunit 1</fullName>
    </alternativeName>
</protein>
<feature type="chain" id="PRO_0000188183" description="ATP synthase epsilon chain 1">
    <location>
        <begin position="1"/>
        <end position="137"/>
    </location>
</feature>
<accession>Q8XU77</accession>
<proteinExistence type="inferred from homology"/>
<sequence length="137" mass="14526">MATIHVDVVSAEQEIFSGDAKFVALPGEAGELGILPGHTPLITRIKPGAVRIETEAGEEFVFVAGGILEVQPKHVTVLADTAIRGHDLDEAKANEAKRAAEEALQNQSSDLDLARAQGELAVATAQLAAIARLRRKR</sequence>
<keyword id="KW-0066">ATP synthesis</keyword>
<keyword id="KW-0997">Cell inner membrane</keyword>
<keyword id="KW-1003">Cell membrane</keyword>
<keyword id="KW-0139">CF(1)</keyword>
<keyword id="KW-0375">Hydrogen ion transport</keyword>
<keyword id="KW-0406">Ion transport</keyword>
<keyword id="KW-0472">Membrane</keyword>
<keyword id="KW-1185">Reference proteome</keyword>
<keyword id="KW-0813">Transport</keyword>
<name>ATPE1_RALN1</name>
<evidence type="ECO:0000250" key="1"/>
<evidence type="ECO:0000305" key="2"/>
<comment type="function">
    <text evidence="1">Produces ATP from ADP in the presence of a proton gradient across the membrane.</text>
</comment>
<comment type="subunit">
    <text>F-type ATPases have 2 components, CF(1) - the catalytic core - and CF(0) - the membrane proton channel. CF(1) has five subunits: alpha(3), beta(3), gamma(1), delta(1), epsilon(1). CF(0) has three main subunits: a, b and c.</text>
</comment>
<comment type="subcellular location">
    <subcellularLocation>
        <location evidence="1">Cell inner membrane</location>
        <topology evidence="1">Peripheral membrane protein</topology>
    </subcellularLocation>
</comment>
<comment type="similarity">
    <text evidence="2">Belongs to the ATPase epsilon chain family.</text>
</comment>
<reference key="1">
    <citation type="journal article" date="2002" name="Nature">
        <title>Genome sequence of the plant pathogen Ralstonia solanacearum.</title>
        <authorList>
            <person name="Salanoubat M."/>
            <person name="Genin S."/>
            <person name="Artiguenave F."/>
            <person name="Gouzy J."/>
            <person name="Mangenot S."/>
            <person name="Arlat M."/>
            <person name="Billault A."/>
            <person name="Brottier P."/>
            <person name="Camus J.-C."/>
            <person name="Cattolico L."/>
            <person name="Chandler M."/>
            <person name="Choisne N."/>
            <person name="Claudel-Renard C."/>
            <person name="Cunnac S."/>
            <person name="Demange N."/>
            <person name="Gaspin C."/>
            <person name="Lavie M."/>
            <person name="Moisan A."/>
            <person name="Robert C."/>
            <person name="Saurin W."/>
            <person name="Schiex T."/>
            <person name="Siguier P."/>
            <person name="Thebault P."/>
            <person name="Whalen M."/>
            <person name="Wincker P."/>
            <person name="Levy M."/>
            <person name="Weissenbach J."/>
            <person name="Boucher C.A."/>
        </authorList>
    </citation>
    <scope>NUCLEOTIDE SEQUENCE [LARGE SCALE GENOMIC DNA]</scope>
    <source>
        <strain>ATCC BAA-1114 / GMI1000</strain>
    </source>
</reference>
<organism>
    <name type="scientific">Ralstonia nicotianae (strain ATCC BAA-1114 / GMI1000)</name>
    <name type="common">Ralstonia solanacearum</name>
    <dbReference type="NCBI Taxonomy" id="267608"/>
    <lineage>
        <taxon>Bacteria</taxon>
        <taxon>Pseudomonadati</taxon>
        <taxon>Pseudomonadota</taxon>
        <taxon>Betaproteobacteria</taxon>
        <taxon>Burkholderiales</taxon>
        <taxon>Burkholderiaceae</taxon>
        <taxon>Ralstonia</taxon>
        <taxon>Ralstonia solanacearum species complex</taxon>
    </lineage>
</organism>
<dbReference type="EMBL" id="AL646052">
    <property type="protein sequence ID" value="CAD17104.1"/>
    <property type="molecule type" value="Genomic_DNA"/>
</dbReference>
<dbReference type="RefSeq" id="WP_011003200.1">
    <property type="nucleotide sequence ID" value="NC_003295.1"/>
</dbReference>
<dbReference type="SMR" id="Q8XU77"/>
<dbReference type="STRING" id="267608.RSc3316"/>
<dbReference type="EnsemblBacteria" id="CAD17104">
    <property type="protein sequence ID" value="CAD17104"/>
    <property type="gene ID" value="RSc3316"/>
</dbReference>
<dbReference type="KEGG" id="rso:RSc3316"/>
<dbReference type="eggNOG" id="COG0355">
    <property type="taxonomic scope" value="Bacteria"/>
</dbReference>
<dbReference type="HOGENOM" id="CLU_084338_2_0_4"/>
<dbReference type="Proteomes" id="UP000001436">
    <property type="component" value="Chromosome"/>
</dbReference>
<dbReference type="GO" id="GO:0005886">
    <property type="term" value="C:plasma membrane"/>
    <property type="evidence" value="ECO:0007669"/>
    <property type="project" value="UniProtKB-SubCell"/>
</dbReference>
<dbReference type="GO" id="GO:0045259">
    <property type="term" value="C:proton-transporting ATP synthase complex"/>
    <property type="evidence" value="ECO:0007669"/>
    <property type="project" value="UniProtKB-KW"/>
</dbReference>
<dbReference type="GO" id="GO:0005524">
    <property type="term" value="F:ATP binding"/>
    <property type="evidence" value="ECO:0007669"/>
    <property type="project" value="UniProtKB-UniRule"/>
</dbReference>
<dbReference type="GO" id="GO:0046933">
    <property type="term" value="F:proton-transporting ATP synthase activity, rotational mechanism"/>
    <property type="evidence" value="ECO:0007669"/>
    <property type="project" value="UniProtKB-UniRule"/>
</dbReference>
<dbReference type="CDD" id="cd12152">
    <property type="entry name" value="F1-ATPase_delta"/>
    <property type="match status" value="1"/>
</dbReference>
<dbReference type="FunFam" id="2.60.15.10:FF:000001">
    <property type="entry name" value="ATP synthase epsilon chain"/>
    <property type="match status" value="1"/>
</dbReference>
<dbReference type="Gene3D" id="1.20.5.440">
    <property type="entry name" value="ATP synthase delta/epsilon subunit, C-terminal domain"/>
    <property type="match status" value="1"/>
</dbReference>
<dbReference type="Gene3D" id="2.60.15.10">
    <property type="entry name" value="F0F1 ATP synthase delta/epsilon subunit, N-terminal"/>
    <property type="match status" value="1"/>
</dbReference>
<dbReference type="HAMAP" id="MF_00530">
    <property type="entry name" value="ATP_synth_epsil_bac"/>
    <property type="match status" value="1"/>
</dbReference>
<dbReference type="InterPro" id="IPR036794">
    <property type="entry name" value="ATP_F1_dsu/esu_C_sf"/>
</dbReference>
<dbReference type="InterPro" id="IPR001469">
    <property type="entry name" value="ATP_synth_F1_dsu/esu"/>
</dbReference>
<dbReference type="InterPro" id="IPR020546">
    <property type="entry name" value="ATP_synth_F1_dsu/esu_N"/>
</dbReference>
<dbReference type="InterPro" id="IPR020547">
    <property type="entry name" value="ATP_synth_F1_esu_C"/>
</dbReference>
<dbReference type="InterPro" id="IPR036771">
    <property type="entry name" value="ATPsynth_dsu/esu_N"/>
</dbReference>
<dbReference type="NCBIfam" id="TIGR01216">
    <property type="entry name" value="ATP_synt_epsi"/>
    <property type="match status" value="1"/>
</dbReference>
<dbReference type="NCBIfam" id="NF001847">
    <property type="entry name" value="PRK00571.1-4"/>
    <property type="match status" value="1"/>
</dbReference>
<dbReference type="PANTHER" id="PTHR13822">
    <property type="entry name" value="ATP SYNTHASE DELTA/EPSILON CHAIN"/>
    <property type="match status" value="1"/>
</dbReference>
<dbReference type="PANTHER" id="PTHR13822:SF10">
    <property type="entry name" value="ATP SYNTHASE EPSILON CHAIN, CHLOROPLASTIC"/>
    <property type="match status" value="1"/>
</dbReference>
<dbReference type="Pfam" id="PF00401">
    <property type="entry name" value="ATP-synt_DE"/>
    <property type="match status" value="1"/>
</dbReference>
<dbReference type="Pfam" id="PF02823">
    <property type="entry name" value="ATP-synt_DE_N"/>
    <property type="match status" value="1"/>
</dbReference>
<dbReference type="SUPFAM" id="SSF46604">
    <property type="entry name" value="Epsilon subunit of F1F0-ATP synthase C-terminal domain"/>
    <property type="match status" value="1"/>
</dbReference>
<dbReference type="SUPFAM" id="SSF51344">
    <property type="entry name" value="Epsilon subunit of F1F0-ATP synthase N-terminal domain"/>
    <property type="match status" value="1"/>
</dbReference>